<feature type="chain" id="PRO_0000173128" description="Large ribosomal subunit protein bL31">
    <location>
        <begin position="1"/>
        <end position="97"/>
    </location>
</feature>
<feature type="region of interest" description="Disordered" evidence="2">
    <location>
        <begin position="76"/>
        <end position="97"/>
    </location>
</feature>
<feature type="compositionally biased region" description="Basic and acidic residues" evidence="2">
    <location>
        <begin position="83"/>
        <end position="97"/>
    </location>
</feature>
<feature type="strand" evidence="5">
    <location>
        <begin position="10"/>
        <end position="19"/>
    </location>
</feature>
<feature type="strand" evidence="5">
    <location>
        <begin position="23"/>
        <end position="29"/>
    </location>
</feature>
<feature type="strand" evidence="5">
    <location>
        <begin position="34"/>
        <end position="38"/>
    </location>
</feature>
<feature type="strand" evidence="5">
    <location>
        <begin position="40"/>
        <end position="42"/>
    </location>
</feature>
<feature type="turn" evidence="5">
    <location>
        <begin position="44"/>
        <end position="46"/>
    </location>
</feature>
<feature type="helix" evidence="4">
    <location>
        <begin position="60"/>
        <end position="74"/>
    </location>
</feature>
<sequence length="97" mass="10959">MKKDFHFPSQSVSFKCASCSNSFTIESTLKQKEITIDICGKCHPFYIGELTKQTVHGRAEKLSGKFNAGKAFLENKTPKKAKGKTEEYTKHRSLNEL</sequence>
<name>RL31_MYCPN</name>
<protein>
    <recommendedName>
        <fullName evidence="1">Large ribosomal subunit protein bL31</fullName>
    </recommendedName>
    <alternativeName>
        <fullName evidence="3">50S ribosomal protein L31</fullName>
    </alternativeName>
</protein>
<dbReference type="EMBL" id="U00089">
    <property type="protein sequence ID" value="AAB96124.1"/>
    <property type="molecule type" value="Genomic_DNA"/>
</dbReference>
<dbReference type="PIR" id="S73802">
    <property type="entry name" value="S73802"/>
</dbReference>
<dbReference type="RefSeq" id="NP_110048.1">
    <property type="nucleotide sequence ID" value="NC_000912.1"/>
</dbReference>
<dbReference type="RefSeq" id="WP_010874716.1">
    <property type="nucleotide sequence ID" value="NZ_OU342337.1"/>
</dbReference>
<dbReference type="PDB" id="7OOD">
    <property type="method" value="EM"/>
    <property type="resolution" value="3.40 A"/>
    <property type="chains" value="x=1-97"/>
</dbReference>
<dbReference type="PDB" id="7P6Z">
    <property type="method" value="EM"/>
    <property type="resolution" value="3.50 A"/>
    <property type="chains" value="x=1-97"/>
</dbReference>
<dbReference type="PDB" id="7PAH">
    <property type="method" value="EM"/>
    <property type="resolution" value="9.50 A"/>
    <property type="chains" value="x=1-97"/>
</dbReference>
<dbReference type="PDB" id="7PAI">
    <property type="method" value="EM"/>
    <property type="resolution" value="6.70 A"/>
    <property type="chains" value="x=1-97"/>
</dbReference>
<dbReference type="PDB" id="7PAJ">
    <property type="method" value="EM"/>
    <property type="resolution" value="7.30 A"/>
    <property type="chains" value="x=1-97"/>
</dbReference>
<dbReference type="PDB" id="7PAK">
    <property type="method" value="EM"/>
    <property type="resolution" value="5.30 A"/>
    <property type="chains" value="x=1-97"/>
</dbReference>
<dbReference type="PDB" id="7PAL">
    <property type="method" value="EM"/>
    <property type="resolution" value="4.70 A"/>
    <property type="chains" value="x=1-97"/>
</dbReference>
<dbReference type="PDB" id="7PAM">
    <property type="method" value="EM"/>
    <property type="resolution" value="6.80 A"/>
    <property type="chains" value="x=1-97"/>
</dbReference>
<dbReference type="PDB" id="7PAN">
    <property type="method" value="EM"/>
    <property type="resolution" value="9.70 A"/>
    <property type="chains" value="x=1-97"/>
</dbReference>
<dbReference type="PDB" id="7PAO">
    <property type="method" value="EM"/>
    <property type="resolution" value="7.00 A"/>
    <property type="chains" value="x=1-97"/>
</dbReference>
<dbReference type="PDB" id="7PAQ">
    <property type="method" value="EM"/>
    <property type="resolution" value="8.90 A"/>
    <property type="chains" value="x=1-97"/>
</dbReference>
<dbReference type="PDB" id="7PAR">
    <property type="method" value="EM"/>
    <property type="resolution" value="8.20 A"/>
    <property type="chains" value="x=1-97"/>
</dbReference>
<dbReference type="PDB" id="7PAS">
    <property type="method" value="EM"/>
    <property type="resolution" value="16.00 A"/>
    <property type="chains" value="x=1-97"/>
</dbReference>
<dbReference type="PDB" id="7PAT">
    <property type="method" value="EM"/>
    <property type="resolution" value="9.20 A"/>
    <property type="chains" value="x=1-97"/>
</dbReference>
<dbReference type="PDB" id="7PAU">
    <property type="method" value="EM"/>
    <property type="resolution" value="8.30 A"/>
    <property type="chains" value="x=1-97"/>
</dbReference>
<dbReference type="PDB" id="7PH9">
    <property type="method" value="EM"/>
    <property type="resolution" value="8.70 A"/>
    <property type="chains" value="x=1-97"/>
</dbReference>
<dbReference type="PDB" id="7PHA">
    <property type="method" value="EM"/>
    <property type="resolution" value="8.50 A"/>
    <property type="chains" value="x=1-97"/>
</dbReference>
<dbReference type="PDB" id="7PHB">
    <property type="method" value="EM"/>
    <property type="resolution" value="4.90 A"/>
    <property type="chains" value="x=1-97"/>
</dbReference>
<dbReference type="PDB" id="7PHC">
    <property type="method" value="EM"/>
    <property type="resolution" value="9.90 A"/>
    <property type="chains" value="x=1-97"/>
</dbReference>
<dbReference type="PDB" id="7PI8">
    <property type="method" value="EM"/>
    <property type="resolution" value="8.90 A"/>
    <property type="chains" value="x=1-97"/>
</dbReference>
<dbReference type="PDB" id="7PI9">
    <property type="method" value="EM"/>
    <property type="resolution" value="6.30 A"/>
    <property type="chains" value="x=1-97"/>
</dbReference>
<dbReference type="PDB" id="7PIA">
    <property type="method" value="EM"/>
    <property type="resolution" value="13.60 A"/>
    <property type="chains" value="x=1-97"/>
</dbReference>
<dbReference type="PDB" id="7PIB">
    <property type="method" value="EM"/>
    <property type="resolution" value="4.70 A"/>
    <property type="chains" value="x=1-97"/>
</dbReference>
<dbReference type="PDB" id="7PIC">
    <property type="method" value="EM"/>
    <property type="resolution" value="9.10 A"/>
    <property type="chains" value="x=1-97"/>
</dbReference>
<dbReference type="PDB" id="7PIO">
    <property type="method" value="EM"/>
    <property type="resolution" value="9.50 A"/>
    <property type="chains" value="x=1-97"/>
</dbReference>
<dbReference type="PDB" id="7PIP">
    <property type="method" value="EM"/>
    <property type="resolution" value="9.30 A"/>
    <property type="chains" value="x=1-97"/>
</dbReference>
<dbReference type="PDB" id="7PIQ">
    <property type="method" value="EM"/>
    <property type="resolution" value="9.70 A"/>
    <property type="chains" value="x=1-97"/>
</dbReference>
<dbReference type="PDB" id="7PIR">
    <property type="method" value="EM"/>
    <property type="resolution" value="12.10 A"/>
    <property type="chains" value="x=1-97"/>
</dbReference>
<dbReference type="PDB" id="7PIS">
    <property type="method" value="EM"/>
    <property type="resolution" value="15.00 A"/>
    <property type="chains" value="x=1-97"/>
</dbReference>
<dbReference type="PDB" id="7PIT">
    <property type="method" value="EM"/>
    <property type="resolution" value="5.70 A"/>
    <property type="chains" value="x=1-97"/>
</dbReference>
<dbReference type="PDB" id="8P6P">
    <property type="method" value="EM"/>
    <property type="resolution" value="3.20 A"/>
    <property type="chains" value="x=1-97"/>
</dbReference>
<dbReference type="PDB" id="8P7X">
    <property type="method" value="EM"/>
    <property type="resolution" value="3.03 A"/>
    <property type="chains" value="x=1-97"/>
</dbReference>
<dbReference type="PDB" id="8P7Y">
    <property type="method" value="EM"/>
    <property type="resolution" value="3.70 A"/>
    <property type="chains" value="x=1-97"/>
</dbReference>
<dbReference type="PDB" id="8P8B">
    <property type="method" value="EM"/>
    <property type="resolution" value="2.90 A"/>
    <property type="chains" value="x=1-97"/>
</dbReference>
<dbReference type="PDB" id="8P8V">
    <property type="method" value="EM"/>
    <property type="resolution" value="8.70 A"/>
    <property type="chains" value="x=1-97"/>
</dbReference>
<dbReference type="PDB" id="8P8W">
    <property type="method" value="EM"/>
    <property type="resolution" value="8.70 A"/>
    <property type="chains" value="x=1-97"/>
</dbReference>
<dbReference type="PDBsum" id="7OOD"/>
<dbReference type="PDBsum" id="7P6Z"/>
<dbReference type="PDBsum" id="7PAH"/>
<dbReference type="PDBsum" id="7PAI"/>
<dbReference type="PDBsum" id="7PAJ"/>
<dbReference type="PDBsum" id="7PAK"/>
<dbReference type="PDBsum" id="7PAL"/>
<dbReference type="PDBsum" id="7PAM"/>
<dbReference type="PDBsum" id="7PAN"/>
<dbReference type="PDBsum" id="7PAO"/>
<dbReference type="PDBsum" id="7PAQ"/>
<dbReference type="PDBsum" id="7PAR"/>
<dbReference type="PDBsum" id="7PAS"/>
<dbReference type="PDBsum" id="7PAT"/>
<dbReference type="PDBsum" id="7PAU"/>
<dbReference type="PDBsum" id="7PH9"/>
<dbReference type="PDBsum" id="7PHA"/>
<dbReference type="PDBsum" id="7PHB"/>
<dbReference type="PDBsum" id="7PHC"/>
<dbReference type="PDBsum" id="7PI8"/>
<dbReference type="PDBsum" id="7PI9"/>
<dbReference type="PDBsum" id="7PIA"/>
<dbReference type="PDBsum" id="7PIB"/>
<dbReference type="PDBsum" id="7PIC"/>
<dbReference type="PDBsum" id="7PIO"/>
<dbReference type="PDBsum" id="7PIP"/>
<dbReference type="PDBsum" id="7PIQ"/>
<dbReference type="PDBsum" id="7PIR"/>
<dbReference type="PDBsum" id="7PIS"/>
<dbReference type="PDBsum" id="7PIT"/>
<dbReference type="PDBsum" id="8P6P"/>
<dbReference type="PDBsum" id="8P7X"/>
<dbReference type="PDBsum" id="8P7Y"/>
<dbReference type="PDBsum" id="8P8B"/>
<dbReference type="PDBsum" id="8P8V"/>
<dbReference type="PDBsum" id="8P8W"/>
<dbReference type="EMDB" id="EMD-13234"/>
<dbReference type="EMDB" id="EMD-13272"/>
<dbReference type="EMDB" id="EMD-13273"/>
<dbReference type="EMDB" id="EMD-13274"/>
<dbReference type="EMDB" id="EMD-13275"/>
<dbReference type="EMDB" id="EMD-13276"/>
<dbReference type="EMDB" id="EMD-13277"/>
<dbReference type="EMDB" id="EMD-13278"/>
<dbReference type="EMDB" id="EMD-13279"/>
<dbReference type="EMDB" id="EMD-13280"/>
<dbReference type="EMDB" id="EMD-13281"/>
<dbReference type="EMDB" id="EMD-13282"/>
<dbReference type="EMDB" id="EMD-13285"/>
<dbReference type="EMDB" id="EMD-13286"/>
<dbReference type="EMDB" id="EMD-13410"/>
<dbReference type="EMDB" id="EMD-13411"/>
<dbReference type="EMDB" id="EMD-13412"/>
<dbReference type="EMDB" id="EMD-13413"/>
<dbReference type="EMDB" id="EMD-13432"/>
<dbReference type="EMDB" id="EMD-13433"/>
<dbReference type="EMDB" id="EMD-13434"/>
<dbReference type="EMDB" id="EMD-13435"/>
<dbReference type="EMDB" id="EMD-13436"/>
<dbReference type="EMDB" id="EMD-13445"/>
<dbReference type="EMDB" id="EMD-13446"/>
<dbReference type="EMDB" id="EMD-13447"/>
<dbReference type="EMDB" id="EMD-13448"/>
<dbReference type="EMDB" id="EMD-13449"/>
<dbReference type="EMDB" id="EMD-13450"/>
<dbReference type="SMR" id="P78020"/>
<dbReference type="IntAct" id="P78020">
    <property type="interactions" value="2"/>
</dbReference>
<dbReference type="STRING" id="272634.MPN_360"/>
<dbReference type="EnsemblBacteria" id="AAB96124">
    <property type="protein sequence ID" value="AAB96124"/>
    <property type="gene ID" value="MPN_360"/>
</dbReference>
<dbReference type="GeneID" id="66608980"/>
<dbReference type="KEGG" id="mpn:MPN_360"/>
<dbReference type="PATRIC" id="fig|272634.6.peg.387"/>
<dbReference type="HOGENOM" id="CLU_114306_4_2_14"/>
<dbReference type="OrthoDB" id="9803251at2"/>
<dbReference type="BioCyc" id="MPNE272634:G1GJ3-567-MONOMER"/>
<dbReference type="Proteomes" id="UP000000808">
    <property type="component" value="Chromosome"/>
</dbReference>
<dbReference type="GO" id="GO:1990904">
    <property type="term" value="C:ribonucleoprotein complex"/>
    <property type="evidence" value="ECO:0007669"/>
    <property type="project" value="UniProtKB-KW"/>
</dbReference>
<dbReference type="GO" id="GO:0005840">
    <property type="term" value="C:ribosome"/>
    <property type="evidence" value="ECO:0007669"/>
    <property type="project" value="UniProtKB-KW"/>
</dbReference>
<dbReference type="GO" id="GO:0019843">
    <property type="term" value="F:rRNA binding"/>
    <property type="evidence" value="ECO:0007669"/>
    <property type="project" value="UniProtKB-KW"/>
</dbReference>
<dbReference type="GO" id="GO:0003735">
    <property type="term" value="F:structural constituent of ribosome"/>
    <property type="evidence" value="ECO:0007669"/>
    <property type="project" value="InterPro"/>
</dbReference>
<dbReference type="GO" id="GO:0006412">
    <property type="term" value="P:translation"/>
    <property type="evidence" value="ECO:0007669"/>
    <property type="project" value="UniProtKB-UniRule"/>
</dbReference>
<dbReference type="Gene3D" id="4.10.830.30">
    <property type="entry name" value="Ribosomal protein L31"/>
    <property type="match status" value="1"/>
</dbReference>
<dbReference type="HAMAP" id="MF_00501">
    <property type="entry name" value="Ribosomal_bL31_1"/>
    <property type="match status" value="1"/>
</dbReference>
<dbReference type="InterPro" id="IPR034704">
    <property type="entry name" value="Ribosomal_bL28/bL31-like_sf"/>
</dbReference>
<dbReference type="InterPro" id="IPR002150">
    <property type="entry name" value="Ribosomal_bL31"/>
</dbReference>
<dbReference type="InterPro" id="IPR027491">
    <property type="entry name" value="Ribosomal_bL31_A"/>
</dbReference>
<dbReference type="InterPro" id="IPR042105">
    <property type="entry name" value="Ribosomal_bL31_sf"/>
</dbReference>
<dbReference type="NCBIfam" id="TIGR00105">
    <property type="entry name" value="L31"/>
    <property type="match status" value="1"/>
</dbReference>
<dbReference type="NCBIfam" id="NF000612">
    <property type="entry name" value="PRK00019.1"/>
    <property type="match status" value="1"/>
</dbReference>
<dbReference type="PANTHER" id="PTHR33280">
    <property type="entry name" value="50S RIBOSOMAL PROTEIN L31, CHLOROPLASTIC"/>
    <property type="match status" value="1"/>
</dbReference>
<dbReference type="PANTHER" id="PTHR33280:SF1">
    <property type="entry name" value="LARGE RIBOSOMAL SUBUNIT PROTEIN BL31C"/>
    <property type="match status" value="1"/>
</dbReference>
<dbReference type="Pfam" id="PF01197">
    <property type="entry name" value="Ribosomal_L31"/>
    <property type="match status" value="1"/>
</dbReference>
<dbReference type="PRINTS" id="PR01249">
    <property type="entry name" value="RIBOSOMALL31"/>
</dbReference>
<dbReference type="SUPFAM" id="SSF143800">
    <property type="entry name" value="L28p-like"/>
    <property type="match status" value="1"/>
</dbReference>
<dbReference type="PROSITE" id="PS01143">
    <property type="entry name" value="RIBOSOMAL_L31"/>
    <property type="match status" value="1"/>
</dbReference>
<proteinExistence type="evidence at protein level"/>
<comment type="function">
    <text evidence="1">Binds the 23S rRNA.</text>
</comment>
<comment type="subunit">
    <text evidence="1">Part of the 50S ribosomal subunit.</text>
</comment>
<comment type="similarity">
    <text evidence="1">Belongs to the bacterial ribosomal protein bL31 family. Type A subfamily.</text>
</comment>
<gene>
    <name evidence="1" type="primary">rpmE</name>
    <name type="ordered locus">MPN_360</name>
    <name type="ORF">MP476</name>
</gene>
<accession>P78020</accession>
<keyword id="KW-0002">3D-structure</keyword>
<keyword id="KW-1185">Reference proteome</keyword>
<keyword id="KW-0687">Ribonucleoprotein</keyword>
<keyword id="KW-0689">Ribosomal protein</keyword>
<keyword id="KW-0694">RNA-binding</keyword>
<keyword id="KW-0699">rRNA-binding</keyword>
<reference key="1">
    <citation type="journal article" date="1996" name="Nucleic Acids Res.">
        <title>Complete sequence analysis of the genome of the bacterium Mycoplasma pneumoniae.</title>
        <authorList>
            <person name="Himmelreich R."/>
            <person name="Hilbert H."/>
            <person name="Plagens H."/>
            <person name="Pirkl E."/>
            <person name="Li B.-C."/>
            <person name="Herrmann R."/>
        </authorList>
    </citation>
    <scope>NUCLEOTIDE SEQUENCE [LARGE SCALE GENOMIC DNA]</scope>
    <source>
        <strain>ATCC 29342 / M129 / Subtype 1</strain>
    </source>
</reference>
<evidence type="ECO:0000255" key="1">
    <source>
        <dbReference type="HAMAP-Rule" id="MF_00501"/>
    </source>
</evidence>
<evidence type="ECO:0000256" key="2">
    <source>
        <dbReference type="SAM" id="MobiDB-lite"/>
    </source>
</evidence>
<evidence type="ECO:0000305" key="3"/>
<evidence type="ECO:0007829" key="4">
    <source>
        <dbReference type="PDB" id="8P6P"/>
    </source>
</evidence>
<evidence type="ECO:0007829" key="5">
    <source>
        <dbReference type="PDB" id="8P8B"/>
    </source>
</evidence>
<organism>
    <name type="scientific">Mycoplasma pneumoniae (strain ATCC 29342 / M129 / Subtype 1)</name>
    <name type="common">Mycoplasmoides pneumoniae</name>
    <dbReference type="NCBI Taxonomy" id="272634"/>
    <lineage>
        <taxon>Bacteria</taxon>
        <taxon>Bacillati</taxon>
        <taxon>Mycoplasmatota</taxon>
        <taxon>Mycoplasmoidales</taxon>
        <taxon>Mycoplasmoidaceae</taxon>
        <taxon>Mycoplasmoides</taxon>
    </lineage>
</organism>